<accession>A1WZE7</accession>
<sequence>MPETPIDPDLTAQVLVEALPYIRRFRGKTIVVKFGGNAMVDEALKVAFARDIVLMRLVGFRVVVVHGGGPQIGNLLERIGKETEFVQGMRVTDAETMDVVEMVLGGLVNKEIVNLISAQGGRAVGLTGKDGGLIRARKLEVEQPGPENQVPEIIDIGHVGEVDHIDPAVVEMLDSGEFIPVVAPIGVDERGTSYNINADLVAGKIAEVLSAEKLLLLTNTPGVLDGAGHLLTGLSPERVDELIADGTIAGGMLPKIRCALDAVAGGVRNAHIIDGRVPHAVLLELFTDKGVGTLIRRQPE</sequence>
<proteinExistence type="inferred from homology"/>
<name>ARGB_HALHL</name>
<dbReference type="EC" id="2.7.2.8" evidence="1"/>
<dbReference type="EMBL" id="CP000544">
    <property type="protein sequence ID" value="ABM63059.1"/>
    <property type="molecule type" value="Genomic_DNA"/>
</dbReference>
<dbReference type="RefSeq" id="WP_011815081.1">
    <property type="nucleotide sequence ID" value="NC_008789.1"/>
</dbReference>
<dbReference type="SMR" id="A1WZE7"/>
<dbReference type="STRING" id="349124.Hhal_2296"/>
<dbReference type="KEGG" id="hha:Hhal_2296"/>
<dbReference type="eggNOG" id="COG0548">
    <property type="taxonomic scope" value="Bacteria"/>
</dbReference>
<dbReference type="HOGENOM" id="CLU_053680_0_0_6"/>
<dbReference type="OrthoDB" id="9803155at2"/>
<dbReference type="UniPathway" id="UPA00068">
    <property type="reaction ID" value="UER00107"/>
</dbReference>
<dbReference type="Proteomes" id="UP000000647">
    <property type="component" value="Chromosome"/>
</dbReference>
<dbReference type="GO" id="GO:0005737">
    <property type="term" value="C:cytoplasm"/>
    <property type="evidence" value="ECO:0007669"/>
    <property type="project" value="UniProtKB-SubCell"/>
</dbReference>
<dbReference type="GO" id="GO:0003991">
    <property type="term" value="F:acetylglutamate kinase activity"/>
    <property type="evidence" value="ECO:0007669"/>
    <property type="project" value="UniProtKB-UniRule"/>
</dbReference>
<dbReference type="GO" id="GO:0005524">
    <property type="term" value="F:ATP binding"/>
    <property type="evidence" value="ECO:0007669"/>
    <property type="project" value="UniProtKB-UniRule"/>
</dbReference>
<dbReference type="GO" id="GO:0042450">
    <property type="term" value="P:arginine biosynthetic process via ornithine"/>
    <property type="evidence" value="ECO:0007669"/>
    <property type="project" value="UniProtKB-UniRule"/>
</dbReference>
<dbReference type="GO" id="GO:0006526">
    <property type="term" value="P:L-arginine biosynthetic process"/>
    <property type="evidence" value="ECO:0007669"/>
    <property type="project" value="UniProtKB-UniPathway"/>
</dbReference>
<dbReference type="CDD" id="cd04250">
    <property type="entry name" value="AAK_NAGK-C"/>
    <property type="match status" value="1"/>
</dbReference>
<dbReference type="FunFam" id="3.40.1160.10:FF:000004">
    <property type="entry name" value="Acetylglutamate kinase"/>
    <property type="match status" value="1"/>
</dbReference>
<dbReference type="Gene3D" id="3.40.1160.10">
    <property type="entry name" value="Acetylglutamate kinase-like"/>
    <property type="match status" value="1"/>
</dbReference>
<dbReference type="HAMAP" id="MF_00082">
    <property type="entry name" value="ArgB"/>
    <property type="match status" value="1"/>
</dbReference>
<dbReference type="InterPro" id="IPR036393">
    <property type="entry name" value="AceGlu_kinase-like_sf"/>
</dbReference>
<dbReference type="InterPro" id="IPR004662">
    <property type="entry name" value="AcgluKinase_fam"/>
</dbReference>
<dbReference type="InterPro" id="IPR037528">
    <property type="entry name" value="ArgB"/>
</dbReference>
<dbReference type="InterPro" id="IPR001048">
    <property type="entry name" value="Asp/Glu/Uridylate_kinase"/>
</dbReference>
<dbReference type="InterPro" id="IPR001057">
    <property type="entry name" value="Glu/AcGlu_kinase"/>
</dbReference>
<dbReference type="InterPro" id="IPR041727">
    <property type="entry name" value="NAGK-C"/>
</dbReference>
<dbReference type="NCBIfam" id="TIGR00761">
    <property type="entry name" value="argB"/>
    <property type="match status" value="1"/>
</dbReference>
<dbReference type="PANTHER" id="PTHR23342">
    <property type="entry name" value="N-ACETYLGLUTAMATE SYNTHASE"/>
    <property type="match status" value="1"/>
</dbReference>
<dbReference type="PANTHER" id="PTHR23342:SF0">
    <property type="entry name" value="N-ACETYLGLUTAMATE SYNTHASE, MITOCHONDRIAL"/>
    <property type="match status" value="1"/>
</dbReference>
<dbReference type="Pfam" id="PF00696">
    <property type="entry name" value="AA_kinase"/>
    <property type="match status" value="1"/>
</dbReference>
<dbReference type="PIRSF" id="PIRSF000728">
    <property type="entry name" value="NAGK"/>
    <property type="match status" value="1"/>
</dbReference>
<dbReference type="PRINTS" id="PR00474">
    <property type="entry name" value="GLU5KINASE"/>
</dbReference>
<dbReference type="SUPFAM" id="SSF53633">
    <property type="entry name" value="Carbamate kinase-like"/>
    <property type="match status" value="1"/>
</dbReference>
<reference key="1">
    <citation type="submission" date="2006-12" db="EMBL/GenBank/DDBJ databases">
        <title>Complete sequence of Halorhodospira halophila SL1.</title>
        <authorList>
            <consortium name="US DOE Joint Genome Institute"/>
            <person name="Copeland A."/>
            <person name="Lucas S."/>
            <person name="Lapidus A."/>
            <person name="Barry K."/>
            <person name="Detter J.C."/>
            <person name="Glavina del Rio T."/>
            <person name="Hammon N."/>
            <person name="Israni S."/>
            <person name="Dalin E."/>
            <person name="Tice H."/>
            <person name="Pitluck S."/>
            <person name="Saunders E."/>
            <person name="Brettin T."/>
            <person name="Bruce D."/>
            <person name="Han C."/>
            <person name="Tapia R."/>
            <person name="Schmutz J."/>
            <person name="Larimer F."/>
            <person name="Land M."/>
            <person name="Hauser L."/>
            <person name="Kyrpides N."/>
            <person name="Mikhailova N."/>
            <person name="Hoff W."/>
            <person name="Richardson P."/>
        </authorList>
    </citation>
    <scope>NUCLEOTIDE SEQUENCE [LARGE SCALE GENOMIC DNA]</scope>
    <source>
        <strain>DSM 244 / SL1</strain>
    </source>
</reference>
<evidence type="ECO:0000255" key="1">
    <source>
        <dbReference type="HAMAP-Rule" id="MF_00082"/>
    </source>
</evidence>
<protein>
    <recommendedName>
        <fullName evidence="1">Acetylglutamate kinase</fullName>
        <ecNumber evidence="1">2.7.2.8</ecNumber>
    </recommendedName>
    <alternativeName>
        <fullName evidence="1">N-acetyl-L-glutamate 5-phosphotransferase</fullName>
    </alternativeName>
    <alternativeName>
        <fullName evidence="1">NAG kinase</fullName>
        <shortName evidence="1">NAGK</shortName>
    </alternativeName>
</protein>
<organism>
    <name type="scientific">Halorhodospira halophila (strain DSM 244 / SL1)</name>
    <name type="common">Ectothiorhodospira halophila (strain DSM 244 / SL1)</name>
    <dbReference type="NCBI Taxonomy" id="349124"/>
    <lineage>
        <taxon>Bacteria</taxon>
        <taxon>Pseudomonadati</taxon>
        <taxon>Pseudomonadota</taxon>
        <taxon>Gammaproteobacteria</taxon>
        <taxon>Chromatiales</taxon>
        <taxon>Ectothiorhodospiraceae</taxon>
        <taxon>Halorhodospira</taxon>
    </lineage>
</organism>
<comment type="function">
    <text evidence="1">Catalyzes the ATP-dependent phosphorylation of N-acetyl-L-glutamate.</text>
</comment>
<comment type="catalytic activity">
    <reaction evidence="1">
        <text>N-acetyl-L-glutamate + ATP = N-acetyl-L-glutamyl 5-phosphate + ADP</text>
        <dbReference type="Rhea" id="RHEA:14629"/>
        <dbReference type="ChEBI" id="CHEBI:30616"/>
        <dbReference type="ChEBI" id="CHEBI:44337"/>
        <dbReference type="ChEBI" id="CHEBI:57936"/>
        <dbReference type="ChEBI" id="CHEBI:456216"/>
        <dbReference type="EC" id="2.7.2.8"/>
    </reaction>
</comment>
<comment type="pathway">
    <text evidence="1">Amino-acid biosynthesis; L-arginine biosynthesis; N(2)-acetyl-L-ornithine from L-glutamate: step 2/4.</text>
</comment>
<comment type="subcellular location">
    <subcellularLocation>
        <location evidence="1">Cytoplasm</location>
    </subcellularLocation>
</comment>
<comment type="similarity">
    <text evidence="1">Belongs to the acetylglutamate kinase family. ArgB subfamily.</text>
</comment>
<gene>
    <name evidence="1" type="primary">argB</name>
    <name type="ordered locus">Hhal_2296</name>
</gene>
<feature type="chain" id="PRO_0000335635" description="Acetylglutamate kinase">
    <location>
        <begin position="1"/>
        <end position="300"/>
    </location>
</feature>
<feature type="binding site" evidence="1">
    <location>
        <begin position="68"/>
        <end position="69"/>
    </location>
    <ligand>
        <name>substrate</name>
    </ligand>
</feature>
<feature type="binding site" evidence="1">
    <location>
        <position position="90"/>
    </location>
    <ligand>
        <name>substrate</name>
    </ligand>
</feature>
<feature type="binding site" evidence="1">
    <location>
        <position position="195"/>
    </location>
    <ligand>
        <name>substrate</name>
    </ligand>
</feature>
<feature type="site" description="Transition state stabilizer" evidence="1">
    <location>
        <position position="33"/>
    </location>
</feature>
<feature type="site" description="Transition state stabilizer" evidence="1">
    <location>
        <position position="255"/>
    </location>
</feature>
<keyword id="KW-0028">Amino-acid biosynthesis</keyword>
<keyword id="KW-0055">Arginine biosynthesis</keyword>
<keyword id="KW-0067">ATP-binding</keyword>
<keyword id="KW-0963">Cytoplasm</keyword>
<keyword id="KW-0418">Kinase</keyword>
<keyword id="KW-0547">Nucleotide-binding</keyword>
<keyword id="KW-1185">Reference proteome</keyword>
<keyword id="KW-0808">Transferase</keyword>